<keyword id="KW-0067">ATP-binding</keyword>
<keyword id="KW-0315">Glutamine amidotransferase</keyword>
<keyword id="KW-0436">Ligase</keyword>
<keyword id="KW-0460">Magnesium</keyword>
<keyword id="KW-0479">Metal-binding</keyword>
<keyword id="KW-0547">Nucleotide-binding</keyword>
<keyword id="KW-0665">Pyrimidine biosynthesis</keyword>
<keyword id="KW-1185">Reference proteome</keyword>
<protein>
    <recommendedName>
        <fullName evidence="1">CTP synthase</fullName>
        <ecNumber evidence="1">6.3.4.2</ecNumber>
    </recommendedName>
    <alternativeName>
        <fullName evidence="1">Cytidine 5'-triphosphate synthase</fullName>
    </alternativeName>
    <alternativeName>
        <fullName evidence="1">Cytidine triphosphate synthetase</fullName>
        <shortName evidence="1">CTP synthetase</shortName>
        <shortName evidence="1">CTPS</shortName>
    </alternativeName>
    <alternativeName>
        <fullName evidence="1">UTP--ammonia ligase</fullName>
    </alternativeName>
</protein>
<proteinExistence type="inferred from homology"/>
<sequence>MSTKFIFVTGGVVSSLGKGIAAASLAAILEARGLNVTILKLDPYINVDPGTMSPIQHGEVYVTEDGAETDLDLGHYERFIRTKMTSRNNFTQGRVYKDVLHRERRGEYLGATIQVIPHITNDIKQRVYSGAEGYDIALVEIGGTVGDIESQPFLEAIRQMGTEIGRERALFIHLTLVPFLGPAGEVKTKPTQHSVKELRSIGIQPDILICRSDRKLPSNERAKIALFTNVEEKAVISLPDVDSIYKIPALLKSQDLDYFVCRRFHLDVPEADLVEWEQVLYQESNPTGEVTIGMVGKYIELPDAYKSVNEALKHAGLKNRLTVNIQYIDSQDLETKGVDSLAHLDAILVPGGFGGRGVEGKILAAKYARENKVPYLGICLGMQVALIEYARNVAGLVDANSTEFNAQSASPVVGLITEWLDAEGKVEQRDEKSDLGGTMRLGAQKCHLTPGSKVHAVYGSDEIVERHRHRYEVNNNFVEQLEKAGLSFTGLSEDKKLVEIIENKDHPWFIAAQFHPEFTSTPRDGHPLFEGFVAAAHIHQKASS</sequence>
<feature type="chain" id="PRO_0000266184" description="CTP synthase">
    <location>
        <begin position="1"/>
        <end position="544"/>
    </location>
</feature>
<feature type="domain" description="Glutamine amidotransferase type-1" evidence="1">
    <location>
        <begin position="291"/>
        <end position="542"/>
    </location>
</feature>
<feature type="region of interest" description="Amidoligase domain" evidence="1">
    <location>
        <begin position="1"/>
        <end position="266"/>
    </location>
</feature>
<feature type="active site" description="Nucleophile; for glutamine hydrolysis" evidence="1">
    <location>
        <position position="379"/>
    </location>
</feature>
<feature type="active site" evidence="1">
    <location>
        <position position="515"/>
    </location>
</feature>
<feature type="active site" evidence="1">
    <location>
        <position position="517"/>
    </location>
</feature>
<feature type="binding site" evidence="1">
    <location>
        <position position="14"/>
    </location>
    <ligand>
        <name>CTP</name>
        <dbReference type="ChEBI" id="CHEBI:37563"/>
        <note>allosteric inhibitor</note>
    </ligand>
</feature>
<feature type="binding site" evidence="1">
    <location>
        <position position="14"/>
    </location>
    <ligand>
        <name>UTP</name>
        <dbReference type="ChEBI" id="CHEBI:46398"/>
    </ligand>
</feature>
<feature type="binding site" evidence="1">
    <location>
        <begin position="15"/>
        <end position="20"/>
    </location>
    <ligand>
        <name>ATP</name>
        <dbReference type="ChEBI" id="CHEBI:30616"/>
    </ligand>
</feature>
<feature type="binding site" evidence="1">
    <location>
        <position position="72"/>
    </location>
    <ligand>
        <name>ATP</name>
        <dbReference type="ChEBI" id="CHEBI:30616"/>
    </ligand>
</feature>
<feature type="binding site" evidence="1">
    <location>
        <position position="72"/>
    </location>
    <ligand>
        <name>Mg(2+)</name>
        <dbReference type="ChEBI" id="CHEBI:18420"/>
    </ligand>
</feature>
<feature type="binding site" evidence="1">
    <location>
        <position position="140"/>
    </location>
    <ligand>
        <name>Mg(2+)</name>
        <dbReference type="ChEBI" id="CHEBI:18420"/>
    </ligand>
</feature>
<feature type="binding site" evidence="1">
    <location>
        <begin position="147"/>
        <end position="149"/>
    </location>
    <ligand>
        <name>CTP</name>
        <dbReference type="ChEBI" id="CHEBI:37563"/>
        <note>allosteric inhibitor</note>
    </ligand>
</feature>
<feature type="binding site" evidence="1">
    <location>
        <begin position="187"/>
        <end position="192"/>
    </location>
    <ligand>
        <name>CTP</name>
        <dbReference type="ChEBI" id="CHEBI:37563"/>
        <note>allosteric inhibitor</note>
    </ligand>
</feature>
<feature type="binding site" evidence="1">
    <location>
        <begin position="187"/>
        <end position="192"/>
    </location>
    <ligand>
        <name>UTP</name>
        <dbReference type="ChEBI" id="CHEBI:46398"/>
    </ligand>
</feature>
<feature type="binding site" evidence="1">
    <location>
        <position position="223"/>
    </location>
    <ligand>
        <name>CTP</name>
        <dbReference type="ChEBI" id="CHEBI:37563"/>
        <note>allosteric inhibitor</note>
    </ligand>
</feature>
<feature type="binding site" evidence="1">
    <location>
        <position position="223"/>
    </location>
    <ligand>
        <name>UTP</name>
        <dbReference type="ChEBI" id="CHEBI:46398"/>
    </ligand>
</feature>
<feature type="binding site" evidence="1">
    <location>
        <position position="352"/>
    </location>
    <ligand>
        <name>L-glutamine</name>
        <dbReference type="ChEBI" id="CHEBI:58359"/>
    </ligand>
</feature>
<feature type="binding site" evidence="1">
    <location>
        <begin position="380"/>
        <end position="383"/>
    </location>
    <ligand>
        <name>L-glutamine</name>
        <dbReference type="ChEBI" id="CHEBI:58359"/>
    </ligand>
</feature>
<feature type="binding site" evidence="1">
    <location>
        <position position="403"/>
    </location>
    <ligand>
        <name>L-glutamine</name>
        <dbReference type="ChEBI" id="CHEBI:58359"/>
    </ligand>
</feature>
<feature type="binding site" evidence="1">
    <location>
        <position position="470"/>
    </location>
    <ligand>
        <name>L-glutamine</name>
        <dbReference type="ChEBI" id="CHEBI:58359"/>
    </ligand>
</feature>
<gene>
    <name evidence="1" type="primary">pyrG</name>
    <name type="ordered locus">PSHAa0741</name>
</gene>
<reference key="1">
    <citation type="journal article" date="2005" name="Genome Res.">
        <title>Coping with cold: the genome of the versatile marine Antarctica bacterium Pseudoalteromonas haloplanktis TAC125.</title>
        <authorList>
            <person name="Medigue C."/>
            <person name="Krin E."/>
            <person name="Pascal G."/>
            <person name="Barbe V."/>
            <person name="Bernsel A."/>
            <person name="Bertin P.N."/>
            <person name="Cheung F."/>
            <person name="Cruveiller S."/>
            <person name="D'Amico S."/>
            <person name="Duilio A."/>
            <person name="Fang G."/>
            <person name="Feller G."/>
            <person name="Ho C."/>
            <person name="Mangenot S."/>
            <person name="Marino G."/>
            <person name="Nilsson J."/>
            <person name="Parrilli E."/>
            <person name="Rocha E.P.C."/>
            <person name="Rouy Z."/>
            <person name="Sekowska A."/>
            <person name="Tutino M.L."/>
            <person name="Vallenet D."/>
            <person name="von Heijne G."/>
            <person name="Danchin A."/>
        </authorList>
    </citation>
    <scope>NUCLEOTIDE SEQUENCE [LARGE SCALE GENOMIC DNA]</scope>
    <source>
        <strain>TAC 125</strain>
    </source>
</reference>
<name>PYRG_PSET1</name>
<organism>
    <name type="scientific">Pseudoalteromonas translucida (strain TAC 125)</name>
    <dbReference type="NCBI Taxonomy" id="326442"/>
    <lineage>
        <taxon>Bacteria</taxon>
        <taxon>Pseudomonadati</taxon>
        <taxon>Pseudomonadota</taxon>
        <taxon>Gammaproteobacteria</taxon>
        <taxon>Alteromonadales</taxon>
        <taxon>Pseudoalteromonadaceae</taxon>
        <taxon>Pseudoalteromonas</taxon>
    </lineage>
</organism>
<evidence type="ECO:0000255" key="1">
    <source>
        <dbReference type="HAMAP-Rule" id="MF_01227"/>
    </source>
</evidence>
<dbReference type="EC" id="6.3.4.2" evidence="1"/>
<dbReference type="EMBL" id="CR954246">
    <property type="protein sequence ID" value="CAI85824.1"/>
    <property type="molecule type" value="Genomic_DNA"/>
</dbReference>
<dbReference type="SMR" id="Q3IDM3"/>
<dbReference type="STRING" id="326442.PSHAa0741"/>
<dbReference type="MEROPS" id="C26.964"/>
<dbReference type="KEGG" id="pha:PSHAa0741"/>
<dbReference type="PATRIC" id="fig|326442.8.peg.704"/>
<dbReference type="eggNOG" id="COG0504">
    <property type="taxonomic scope" value="Bacteria"/>
</dbReference>
<dbReference type="HOGENOM" id="CLU_011675_5_0_6"/>
<dbReference type="BioCyc" id="PHAL326442:PSHA_RS03620-MONOMER"/>
<dbReference type="UniPathway" id="UPA00159">
    <property type="reaction ID" value="UER00277"/>
</dbReference>
<dbReference type="Proteomes" id="UP000006843">
    <property type="component" value="Chromosome I"/>
</dbReference>
<dbReference type="GO" id="GO:0005829">
    <property type="term" value="C:cytosol"/>
    <property type="evidence" value="ECO:0007669"/>
    <property type="project" value="TreeGrafter"/>
</dbReference>
<dbReference type="GO" id="GO:0005524">
    <property type="term" value="F:ATP binding"/>
    <property type="evidence" value="ECO:0007669"/>
    <property type="project" value="UniProtKB-KW"/>
</dbReference>
<dbReference type="GO" id="GO:0003883">
    <property type="term" value="F:CTP synthase activity"/>
    <property type="evidence" value="ECO:0007669"/>
    <property type="project" value="UniProtKB-UniRule"/>
</dbReference>
<dbReference type="GO" id="GO:0004359">
    <property type="term" value="F:glutaminase activity"/>
    <property type="evidence" value="ECO:0007669"/>
    <property type="project" value="RHEA"/>
</dbReference>
<dbReference type="GO" id="GO:0042802">
    <property type="term" value="F:identical protein binding"/>
    <property type="evidence" value="ECO:0007669"/>
    <property type="project" value="TreeGrafter"/>
</dbReference>
<dbReference type="GO" id="GO:0046872">
    <property type="term" value="F:metal ion binding"/>
    <property type="evidence" value="ECO:0007669"/>
    <property type="project" value="UniProtKB-KW"/>
</dbReference>
<dbReference type="GO" id="GO:0044210">
    <property type="term" value="P:'de novo' CTP biosynthetic process"/>
    <property type="evidence" value="ECO:0007669"/>
    <property type="project" value="UniProtKB-UniRule"/>
</dbReference>
<dbReference type="GO" id="GO:0019856">
    <property type="term" value="P:pyrimidine nucleobase biosynthetic process"/>
    <property type="evidence" value="ECO:0007669"/>
    <property type="project" value="TreeGrafter"/>
</dbReference>
<dbReference type="CDD" id="cd03113">
    <property type="entry name" value="CTPS_N"/>
    <property type="match status" value="1"/>
</dbReference>
<dbReference type="CDD" id="cd01746">
    <property type="entry name" value="GATase1_CTP_Synthase"/>
    <property type="match status" value="1"/>
</dbReference>
<dbReference type="FunFam" id="3.40.50.300:FF:000009">
    <property type="entry name" value="CTP synthase"/>
    <property type="match status" value="1"/>
</dbReference>
<dbReference type="FunFam" id="3.40.50.880:FF:000002">
    <property type="entry name" value="CTP synthase"/>
    <property type="match status" value="1"/>
</dbReference>
<dbReference type="Gene3D" id="3.40.50.880">
    <property type="match status" value="1"/>
</dbReference>
<dbReference type="Gene3D" id="3.40.50.300">
    <property type="entry name" value="P-loop containing nucleotide triphosphate hydrolases"/>
    <property type="match status" value="1"/>
</dbReference>
<dbReference type="HAMAP" id="MF_01227">
    <property type="entry name" value="PyrG"/>
    <property type="match status" value="1"/>
</dbReference>
<dbReference type="InterPro" id="IPR029062">
    <property type="entry name" value="Class_I_gatase-like"/>
</dbReference>
<dbReference type="InterPro" id="IPR004468">
    <property type="entry name" value="CTP_synthase"/>
</dbReference>
<dbReference type="InterPro" id="IPR017456">
    <property type="entry name" value="CTP_synthase_N"/>
</dbReference>
<dbReference type="InterPro" id="IPR017926">
    <property type="entry name" value="GATASE"/>
</dbReference>
<dbReference type="InterPro" id="IPR033828">
    <property type="entry name" value="GATase1_CTP_Synthase"/>
</dbReference>
<dbReference type="InterPro" id="IPR027417">
    <property type="entry name" value="P-loop_NTPase"/>
</dbReference>
<dbReference type="NCBIfam" id="NF003792">
    <property type="entry name" value="PRK05380.1"/>
    <property type="match status" value="1"/>
</dbReference>
<dbReference type="NCBIfam" id="TIGR00337">
    <property type="entry name" value="PyrG"/>
    <property type="match status" value="1"/>
</dbReference>
<dbReference type="PANTHER" id="PTHR11550">
    <property type="entry name" value="CTP SYNTHASE"/>
    <property type="match status" value="1"/>
</dbReference>
<dbReference type="PANTHER" id="PTHR11550:SF0">
    <property type="entry name" value="CTP SYNTHASE-RELATED"/>
    <property type="match status" value="1"/>
</dbReference>
<dbReference type="Pfam" id="PF06418">
    <property type="entry name" value="CTP_synth_N"/>
    <property type="match status" value="1"/>
</dbReference>
<dbReference type="Pfam" id="PF00117">
    <property type="entry name" value="GATase"/>
    <property type="match status" value="1"/>
</dbReference>
<dbReference type="SUPFAM" id="SSF52317">
    <property type="entry name" value="Class I glutamine amidotransferase-like"/>
    <property type="match status" value="1"/>
</dbReference>
<dbReference type="SUPFAM" id="SSF52540">
    <property type="entry name" value="P-loop containing nucleoside triphosphate hydrolases"/>
    <property type="match status" value="1"/>
</dbReference>
<dbReference type="PROSITE" id="PS51273">
    <property type="entry name" value="GATASE_TYPE_1"/>
    <property type="match status" value="1"/>
</dbReference>
<accession>Q3IDM3</accession>
<comment type="function">
    <text evidence="1">Catalyzes the ATP-dependent amination of UTP to CTP with either L-glutamine or ammonia as the source of nitrogen. Regulates intracellular CTP levels through interactions with the four ribonucleotide triphosphates.</text>
</comment>
<comment type="catalytic activity">
    <reaction evidence="1">
        <text>UTP + L-glutamine + ATP + H2O = CTP + L-glutamate + ADP + phosphate + 2 H(+)</text>
        <dbReference type="Rhea" id="RHEA:26426"/>
        <dbReference type="ChEBI" id="CHEBI:15377"/>
        <dbReference type="ChEBI" id="CHEBI:15378"/>
        <dbReference type="ChEBI" id="CHEBI:29985"/>
        <dbReference type="ChEBI" id="CHEBI:30616"/>
        <dbReference type="ChEBI" id="CHEBI:37563"/>
        <dbReference type="ChEBI" id="CHEBI:43474"/>
        <dbReference type="ChEBI" id="CHEBI:46398"/>
        <dbReference type="ChEBI" id="CHEBI:58359"/>
        <dbReference type="ChEBI" id="CHEBI:456216"/>
        <dbReference type="EC" id="6.3.4.2"/>
    </reaction>
</comment>
<comment type="catalytic activity">
    <reaction evidence="1">
        <text>L-glutamine + H2O = L-glutamate + NH4(+)</text>
        <dbReference type="Rhea" id="RHEA:15889"/>
        <dbReference type="ChEBI" id="CHEBI:15377"/>
        <dbReference type="ChEBI" id="CHEBI:28938"/>
        <dbReference type="ChEBI" id="CHEBI:29985"/>
        <dbReference type="ChEBI" id="CHEBI:58359"/>
    </reaction>
</comment>
<comment type="catalytic activity">
    <reaction evidence="1">
        <text>UTP + NH4(+) + ATP = CTP + ADP + phosphate + 2 H(+)</text>
        <dbReference type="Rhea" id="RHEA:16597"/>
        <dbReference type="ChEBI" id="CHEBI:15378"/>
        <dbReference type="ChEBI" id="CHEBI:28938"/>
        <dbReference type="ChEBI" id="CHEBI:30616"/>
        <dbReference type="ChEBI" id="CHEBI:37563"/>
        <dbReference type="ChEBI" id="CHEBI:43474"/>
        <dbReference type="ChEBI" id="CHEBI:46398"/>
        <dbReference type="ChEBI" id="CHEBI:456216"/>
    </reaction>
</comment>
<comment type="activity regulation">
    <text evidence="1">Allosterically activated by GTP, when glutamine is the substrate; GTP has no effect on the reaction when ammonia is the substrate. The allosteric effector GTP functions by stabilizing the protein conformation that binds the tetrahedral intermediate(s) formed during glutamine hydrolysis. Inhibited by the product CTP, via allosteric rather than competitive inhibition.</text>
</comment>
<comment type="pathway">
    <text evidence="1">Pyrimidine metabolism; CTP biosynthesis via de novo pathway; CTP from UDP: step 2/2.</text>
</comment>
<comment type="subunit">
    <text evidence="1">Homotetramer.</text>
</comment>
<comment type="miscellaneous">
    <text evidence="1">CTPSs have evolved a hybrid strategy for distinguishing between UTP and CTP. The overlapping regions of the product feedback inhibitory and substrate sites recognize a common feature in both compounds, the triphosphate moiety. To differentiate isosteric substrate and product pyrimidine rings, an additional pocket far from the expected kinase/ligase catalytic site, specifically recognizes the cytosine and ribose portions of the product inhibitor.</text>
</comment>
<comment type="similarity">
    <text evidence="1">Belongs to the CTP synthase family.</text>
</comment>